<protein>
    <recommendedName>
        <fullName evidence="1">Large ribosomal subunit protein bL34</fullName>
    </recommendedName>
    <alternativeName>
        <fullName evidence="3">50S ribosomal protein L34</fullName>
    </alternativeName>
</protein>
<organism>
    <name type="scientific">Clostridium botulinum (strain Kyoto / Type A2)</name>
    <dbReference type="NCBI Taxonomy" id="536232"/>
    <lineage>
        <taxon>Bacteria</taxon>
        <taxon>Bacillati</taxon>
        <taxon>Bacillota</taxon>
        <taxon>Clostridia</taxon>
        <taxon>Eubacteriales</taxon>
        <taxon>Clostridiaceae</taxon>
        <taxon>Clostridium</taxon>
    </lineage>
</organism>
<evidence type="ECO:0000255" key="1">
    <source>
        <dbReference type="HAMAP-Rule" id="MF_00391"/>
    </source>
</evidence>
<evidence type="ECO:0000256" key="2">
    <source>
        <dbReference type="SAM" id="MobiDB-lite"/>
    </source>
</evidence>
<evidence type="ECO:0000305" key="3"/>
<sequence>MFMTYQPKKRQRKKEHGFRKRMKTSSGRNILRKRRQKGRKRLTA</sequence>
<name>RL34_CLOBJ</name>
<feature type="chain" id="PRO_1000134434" description="Large ribosomal subunit protein bL34">
    <location>
        <begin position="1"/>
        <end position="44"/>
    </location>
</feature>
<feature type="region of interest" description="Disordered" evidence="2">
    <location>
        <begin position="1"/>
        <end position="44"/>
    </location>
</feature>
<feature type="compositionally biased region" description="Basic residues" evidence="2">
    <location>
        <begin position="7"/>
        <end position="23"/>
    </location>
</feature>
<feature type="compositionally biased region" description="Basic residues" evidence="2">
    <location>
        <begin position="30"/>
        <end position="44"/>
    </location>
</feature>
<keyword id="KW-0687">Ribonucleoprotein</keyword>
<keyword id="KW-0689">Ribosomal protein</keyword>
<dbReference type="EMBL" id="CP001581">
    <property type="protein sequence ID" value="ACO84843.1"/>
    <property type="molecule type" value="Genomic_DNA"/>
</dbReference>
<dbReference type="RefSeq" id="WP_003359452.1">
    <property type="nucleotide sequence ID" value="NC_012563.1"/>
</dbReference>
<dbReference type="SMR" id="C1FP36"/>
<dbReference type="GeneID" id="92940449"/>
<dbReference type="KEGG" id="cby:CLM_4153"/>
<dbReference type="eggNOG" id="COG0230">
    <property type="taxonomic scope" value="Bacteria"/>
</dbReference>
<dbReference type="HOGENOM" id="CLU_129938_2_0_9"/>
<dbReference type="Proteomes" id="UP000001374">
    <property type="component" value="Chromosome"/>
</dbReference>
<dbReference type="GO" id="GO:1990904">
    <property type="term" value="C:ribonucleoprotein complex"/>
    <property type="evidence" value="ECO:0007669"/>
    <property type="project" value="UniProtKB-KW"/>
</dbReference>
<dbReference type="GO" id="GO:0005840">
    <property type="term" value="C:ribosome"/>
    <property type="evidence" value="ECO:0007669"/>
    <property type="project" value="UniProtKB-KW"/>
</dbReference>
<dbReference type="GO" id="GO:0003735">
    <property type="term" value="F:structural constituent of ribosome"/>
    <property type="evidence" value="ECO:0007669"/>
    <property type="project" value="InterPro"/>
</dbReference>
<dbReference type="GO" id="GO:0006412">
    <property type="term" value="P:translation"/>
    <property type="evidence" value="ECO:0007669"/>
    <property type="project" value="UniProtKB-UniRule"/>
</dbReference>
<dbReference type="FunFam" id="1.10.287.3980:FF:000001">
    <property type="entry name" value="Mitochondrial ribosomal protein L34"/>
    <property type="match status" value="1"/>
</dbReference>
<dbReference type="Gene3D" id="1.10.287.3980">
    <property type="match status" value="1"/>
</dbReference>
<dbReference type="HAMAP" id="MF_00391">
    <property type="entry name" value="Ribosomal_bL34"/>
    <property type="match status" value="1"/>
</dbReference>
<dbReference type="InterPro" id="IPR000271">
    <property type="entry name" value="Ribosomal_bL34"/>
</dbReference>
<dbReference type="InterPro" id="IPR020939">
    <property type="entry name" value="Ribosomal_bL34_CS"/>
</dbReference>
<dbReference type="NCBIfam" id="TIGR01030">
    <property type="entry name" value="rpmH_bact"/>
    <property type="match status" value="1"/>
</dbReference>
<dbReference type="PANTHER" id="PTHR14503:SF4">
    <property type="entry name" value="LARGE RIBOSOMAL SUBUNIT PROTEIN BL34M"/>
    <property type="match status" value="1"/>
</dbReference>
<dbReference type="PANTHER" id="PTHR14503">
    <property type="entry name" value="MITOCHONDRIAL RIBOSOMAL PROTEIN 34 FAMILY MEMBER"/>
    <property type="match status" value="1"/>
</dbReference>
<dbReference type="Pfam" id="PF00468">
    <property type="entry name" value="Ribosomal_L34"/>
    <property type="match status" value="1"/>
</dbReference>
<dbReference type="PROSITE" id="PS00784">
    <property type="entry name" value="RIBOSOMAL_L34"/>
    <property type="match status" value="1"/>
</dbReference>
<reference key="1">
    <citation type="submission" date="2008-10" db="EMBL/GenBank/DDBJ databases">
        <title>Genome sequence of Clostridium botulinum A2 Kyoto.</title>
        <authorList>
            <person name="Shrivastava S."/>
            <person name="Brinkac L.M."/>
            <person name="Brown J.L."/>
            <person name="Bruce D."/>
            <person name="Detter C.C."/>
            <person name="Johnson E.A."/>
            <person name="Munk C.A."/>
            <person name="Smith L.A."/>
            <person name="Smith T.J."/>
            <person name="Sutton G."/>
            <person name="Brettin T.S."/>
        </authorList>
    </citation>
    <scope>NUCLEOTIDE SEQUENCE [LARGE SCALE GENOMIC DNA]</scope>
    <source>
        <strain>Kyoto / Type A2</strain>
    </source>
</reference>
<comment type="similarity">
    <text evidence="1">Belongs to the bacterial ribosomal protein bL34 family.</text>
</comment>
<accession>C1FP36</accession>
<proteinExistence type="inferred from homology"/>
<gene>
    <name evidence="1" type="primary">rpmH</name>
    <name type="ordered locus">CLM_4153</name>
</gene>